<comment type="function">
    <text evidence="1">Component of the eukaryotic translation initiation factor 3 (eIF-3) complex, which is involved in protein synthesis of a specialized repertoire of mRNAs and, together with other initiation factors, stimulates binding of mRNA and methionyl-tRNAi to the 40S ribosome. The eIF-3 complex specifically targets and initiates translation of a subset of mRNAs involved in cell proliferation.</text>
</comment>
<comment type="subunit">
    <text evidence="1">Component of the eukaryotic translation initiation factor 3 (eIF-3) complex. The eIF-3 complex interacts with pix.</text>
</comment>
<comment type="subcellular location">
    <subcellularLocation>
        <location evidence="1">Cytoplasm</location>
    </subcellularLocation>
</comment>
<comment type="similarity">
    <text evidence="1">Belongs to the eIF-3 subunit J family.</text>
</comment>
<accession>B4MP81</accession>
<accession>Q8I166</accession>
<proteinExistence type="inferred from homology"/>
<gene>
    <name evidence="1" type="primary">eIF3j</name>
    <name evidence="1" type="synonym">Adam</name>
    <name type="ORF">GK21662</name>
</gene>
<sequence>MADDWESAADSEVVILPNAANNINKWEGEDDDEDVKESWEDEEEKKDEEKPTKTEVPVKPKPTRALKAKLEEEERLREAEEEKRLANLTPEEKFAEKLRVKKMQEESDMKHTLDTFGVTSISGGLESFNPESKEEFKEFGDTLSWKVAQFKESPHFPQFVEDLVRSICVNLSAADIKKVKINVELLHSEKLKLEKANTKKPIGKGKGKVSLRTENDDIDGYQKYGNDFTDDYDDFM</sequence>
<evidence type="ECO:0000255" key="1">
    <source>
        <dbReference type="HAMAP-Rule" id="MF_03009"/>
    </source>
</evidence>
<evidence type="ECO:0000256" key="2">
    <source>
        <dbReference type="SAM" id="MobiDB-lite"/>
    </source>
</evidence>
<evidence type="ECO:0000305" key="3"/>
<protein>
    <recommendedName>
        <fullName evidence="1">Eukaryotic translation initiation factor 3 subunit J</fullName>
        <shortName evidence="1">eIF3j</shortName>
    </recommendedName>
</protein>
<keyword id="KW-0963">Cytoplasm</keyword>
<keyword id="KW-0396">Initiation factor</keyword>
<keyword id="KW-0648">Protein biosynthesis</keyword>
<keyword id="KW-1185">Reference proteome</keyword>
<dbReference type="EMBL" id="AY190959">
    <property type="protein sequence ID" value="AAO01104.1"/>
    <property type="molecule type" value="Genomic_DNA"/>
</dbReference>
<dbReference type="EMBL" id="CH963849">
    <property type="protein sequence ID" value="EDW73920.1"/>
    <property type="molecule type" value="Genomic_DNA"/>
</dbReference>
<dbReference type="SMR" id="B4MP81"/>
<dbReference type="STRING" id="7260.B4MP81"/>
<dbReference type="EnsemblMetazoa" id="FBtr0252313">
    <property type="protein sequence ID" value="FBpp0250805"/>
    <property type="gene ID" value="FBgn0064303"/>
</dbReference>
<dbReference type="EnsemblMetazoa" id="XM_002062898.4">
    <property type="protein sequence ID" value="XP_002062934.1"/>
    <property type="gene ID" value="LOC6640598"/>
</dbReference>
<dbReference type="GeneID" id="6640598"/>
<dbReference type="KEGG" id="dwi:6640598"/>
<dbReference type="CTD" id="8669"/>
<dbReference type="eggNOG" id="KOG4813">
    <property type="taxonomic scope" value="Eukaryota"/>
</dbReference>
<dbReference type="HOGENOM" id="CLU_085806_2_1_1"/>
<dbReference type="OMA" id="KPHYALW"/>
<dbReference type="OrthoDB" id="20381at2759"/>
<dbReference type="PhylomeDB" id="B4MP81"/>
<dbReference type="ChiTaRS" id="Adam">
    <property type="organism name" value="fly"/>
</dbReference>
<dbReference type="Proteomes" id="UP000007798">
    <property type="component" value="Unassembled WGS sequence"/>
</dbReference>
<dbReference type="GO" id="GO:0016282">
    <property type="term" value="C:eukaryotic 43S preinitiation complex"/>
    <property type="evidence" value="ECO:0007669"/>
    <property type="project" value="UniProtKB-UniRule"/>
</dbReference>
<dbReference type="GO" id="GO:0033290">
    <property type="term" value="C:eukaryotic 48S preinitiation complex"/>
    <property type="evidence" value="ECO:0007669"/>
    <property type="project" value="UniProtKB-UniRule"/>
</dbReference>
<dbReference type="GO" id="GO:0005852">
    <property type="term" value="C:eukaryotic translation initiation factor 3 complex"/>
    <property type="evidence" value="ECO:0007669"/>
    <property type="project" value="UniProtKB-UniRule"/>
</dbReference>
<dbReference type="GO" id="GO:0003743">
    <property type="term" value="F:translation initiation factor activity"/>
    <property type="evidence" value="ECO:0007669"/>
    <property type="project" value="UniProtKB-UniRule"/>
</dbReference>
<dbReference type="GO" id="GO:0001732">
    <property type="term" value="P:formation of cytoplasmic translation initiation complex"/>
    <property type="evidence" value="ECO:0007669"/>
    <property type="project" value="UniProtKB-UniRule"/>
</dbReference>
<dbReference type="GO" id="GO:0006446">
    <property type="term" value="P:regulation of translational initiation"/>
    <property type="evidence" value="ECO:0007669"/>
    <property type="project" value="EnsemblMetazoa"/>
</dbReference>
<dbReference type="Gene3D" id="1.10.246.60">
    <property type="entry name" value="Eukaryotic translation initiation factor 3 like domains"/>
    <property type="match status" value="1"/>
</dbReference>
<dbReference type="HAMAP" id="MF_03009">
    <property type="entry name" value="eIF3j"/>
    <property type="match status" value="1"/>
</dbReference>
<dbReference type="InterPro" id="IPR023194">
    <property type="entry name" value="eIF3-like_dom_sf"/>
</dbReference>
<dbReference type="InterPro" id="IPR013906">
    <property type="entry name" value="eIF3j"/>
</dbReference>
<dbReference type="PANTHER" id="PTHR21681">
    <property type="entry name" value="EUKARYOTIC TRANSLATION INITIATION FACTOR 3 SUBUNIT J"/>
    <property type="match status" value="1"/>
</dbReference>
<dbReference type="PANTHER" id="PTHR21681:SF0">
    <property type="entry name" value="EUKARYOTIC TRANSLATION INITIATION FACTOR 3 SUBUNIT J"/>
    <property type="match status" value="1"/>
</dbReference>
<dbReference type="Pfam" id="PF08597">
    <property type="entry name" value="eIF3_subunit"/>
    <property type="match status" value="1"/>
</dbReference>
<organism>
    <name type="scientific">Drosophila willistoni</name>
    <name type="common">Fruit fly</name>
    <dbReference type="NCBI Taxonomy" id="7260"/>
    <lineage>
        <taxon>Eukaryota</taxon>
        <taxon>Metazoa</taxon>
        <taxon>Ecdysozoa</taxon>
        <taxon>Arthropoda</taxon>
        <taxon>Hexapoda</taxon>
        <taxon>Insecta</taxon>
        <taxon>Pterygota</taxon>
        <taxon>Neoptera</taxon>
        <taxon>Endopterygota</taxon>
        <taxon>Diptera</taxon>
        <taxon>Brachycera</taxon>
        <taxon>Muscomorpha</taxon>
        <taxon>Ephydroidea</taxon>
        <taxon>Drosophilidae</taxon>
        <taxon>Drosophila</taxon>
        <taxon>Sophophora</taxon>
    </lineage>
</organism>
<feature type="chain" id="PRO_0000365142" description="Eukaryotic translation initiation factor 3 subunit J">
    <location>
        <begin position="1"/>
        <end position="236"/>
    </location>
</feature>
<feature type="region of interest" description="Disordered" evidence="2">
    <location>
        <begin position="20"/>
        <end position="88"/>
    </location>
</feature>
<feature type="compositionally biased region" description="Acidic residues" evidence="2">
    <location>
        <begin position="28"/>
        <end position="46"/>
    </location>
</feature>
<feature type="compositionally biased region" description="Basic and acidic residues" evidence="2">
    <location>
        <begin position="47"/>
        <end position="58"/>
    </location>
</feature>
<feature type="compositionally biased region" description="Basic and acidic residues" evidence="2">
    <location>
        <begin position="68"/>
        <end position="88"/>
    </location>
</feature>
<feature type="sequence conflict" description="In Ref. 1; AAO01104." evidence="3" ref="1">
    <original>T</original>
    <variation>A</variation>
    <location>
        <position position="119"/>
    </location>
</feature>
<feature type="sequence conflict" description="In Ref. 1; AAO01104." evidence="3" ref="1">
    <original>L</original>
    <variation>V</variation>
    <location>
        <position position="171"/>
    </location>
</feature>
<reference key="1">
    <citation type="journal article" date="2002" name="Genome Biol.">
        <title>Assessing the impact of comparative genomic sequence data on the functional annotation of the Drosophila genome.</title>
        <authorList>
            <person name="Bergman C.M."/>
            <person name="Pfeiffer B.D."/>
            <person name="Rincon-Limas D.E."/>
            <person name="Hoskins R.A."/>
            <person name="Gnirke A."/>
            <person name="Mungall C.J."/>
            <person name="Wang A.M."/>
            <person name="Kronmiller B."/>
            <person name="Pacleb J.M."/>
            <person name="Park S."/>
            <person name="Stapleton M."/>
            <person name="Wan K.H."/>
            <person name="George R.A."/>
            <person name="de Jong P.J."/>
            <person name="Botas J."/>
            <person name="Rubin G.M."/>
            <person name="Celniker S.E."/>
        </authorList>
    </citation>
    <scope>NUCLEOTIDE SEQUENCE [GENOMIC DNA]</scope>
</reference>
<reference key="2">
    <citation type="journal article" date="2007" name="Nature">
        <title>Evolution of genes and genomes on the Drosophila phylogeny.</title>
        <authorList>
            <consortium name="Drosophila 12 genomes consortium"/>
        </authorList>
    </citation>
    <scope>NUCLEOTIDE SEQUENCE [LARGE SCALE GENOMIC DNA]</scope>
    <source>
        <strain>Tucson 14030-0811.24</strain>
    </source>
</reference>
<name>EIF3J_DROWI</name>